<dbReference type="EMBL" id="Y18930">
    <property type="protein sequence ID" value="CAB57534.1"/>
    <property type="molecule type" value="Genomic_DNA"/>
</dbReference>
<dbReference type="EMBL" id="AE006641">
    <property type="protein sequence ID" value="AAK41066.1"/>
    <property type="molecule type" value="Genomic_DNA"/>
</dbReference>
<dbReference type="PIR" id="C90226">
    <property type="entry name" value="C90226"/>
</dbReference>
<dbReference type="RefSeq" id="WP_009991358.1">
    <property type="nucleotide sequence ID" value="NC_002754.1"/>
</dbReference>
<dbReference type="SMR" id="Q9UXF6"/>
<dbReference type="STRING" id="273057.SSO0769"/>
<dbReference type="PaxDb" id="273057-SSO0769"/>
<dbReference type="EnsemblBacteria" id="AAK41066">
    <property type="protein sequence ID" value="AAK41066"/>
    <property type="gene ID" value="SSO0769"/>
</dbReference>
<dbReference type="KEGG" id="sso:SSO0769"/>
<dbReference type="PATRIC" id="fig|273057.12.peg.768"/>
<dbReference type="eggNOG" id="arCOG00470">
    <property type="taxonomic scope" value="Archaea"/>
</dbReference>
<dbReference type="HOGENOM" id="CLU_027255_1_1_2"/>
<dbReference type="InParanoid" id="Q9UXF6"/>
<dbReference type="PhylomeDB" id="Q9UXF6"/>
<dbReference type="BRENDA" id="3.6.4.B8">
    <property type="organism ID" value="6163"/>
</dbReference>
<dbReference type="Proteomes" id="UP000001974">
    <property type="component" value="Chromosome"/>
</dbReference>
<dbReference type="GO" id="GO:0005524">
    <property type="term" value="F:ATP binding"/>
    <property type="evidence" value="ECO:0007669"/>
    <property type="project" value="UniProtKB-UniRule"/>
</dbReference>
<dbReference type="GO" id="GO:0016887">
    <property type="term" value="F:ATP hydrolysis activity"/>
    <property type="evidence" value="ECO:0007669"/>
    <property type="project" value="InterPro"/>
</dbReference>
<dbReference type="GO" id="GO:0003689">
    <property type="term" value="F:DNA clamp loader activity"/>
    <property type="evidence" value="ECO:0007669"/>
    <property type="project" value="UniProtKB-UniRule"/>
</dbReference>
<dbReference type="GO" id="GO:0006260">
    <property type="term" value="P:DNA replication"/>
    <property type="evidence" value="ECO:0007669"/>
    <property type="project" value="UniProtKB-UniRule"/>
</dbReference>
<dbReference type="CDD" id="cd00009">
    <property type="entry name" value="AAA"/>
    <property type="match status" value="1"/>
</dbReference>
<dbReference type="CDD" id="cd18140">
    <property type="entry name" value="HLD_clamp_RFC"/>
    <property type="match status" value="1"/>
</dbReference>
<dbReference type="Gene3D" id="1.10.8.60">
    <property type="match status" value="1"/>
</dbReference>
<dbReference type="Gene3D" id="3.40.50.300">
    <property type="entry name" value="P-loop containing nucleotide triphosphate hydrolases"/>
    <property type="match status" value="1"/>
</dbReference>
<dbReference type="HAMAP" id="MF_01508">
    <property type="entry name" value="RfcL"/>
    <property type="match status" value="1"/>
</dbReference>
<dbReference type="InterPro" id="IPR003593">
    <property type="entry name" value="AAA+_ATPase"/>
</dbReference>
<dbReference type="InterPro" id="IPR003959">
    <property type="entry name" value="ATPase_AAA_core"/>
</dbReference>
<dbReference type="InterPro" id="IPR027417">
    <property type="entry name" value="P-loop_NTPase"/>
</dbReference>
<dbReference type="InterPro" id="IPR023935">
    <property type="entry name" value="Rep_factor-C_lsu"/>
</dbReference>
<dbReference type="InterPro" id="IPR047854">
    <property type="entry name" value="RFC_lid"/>
</dbReference>
<dbReference type="NCBIfam" id="NF003226">
    <property type="entry name" value="PRK04195.1-1"/>
    <property type="match status" value="1"/>
</dbReference>
<dbReference type="NCBIfam" id="NF003229">
    <property type="entry name" value="PRK04195.1-5"/>
    <property type="match status" value="1"/>
</dbReference>
<dbReference type="PANTHER" id="PTHR23389">
    <property type="entry name" value="CHROMOSOME TRANSMISSION FIDELITY FACTOR 18"/>
    <property type="match status" value="1"/>
</dbReference>
<dbReference type="PANTHER" id="PTHR23389:SF6">
    <property type="entry name" value="REPLICATION FACTOR C SUBUNIT 1"/>
    <property type="match status" value="1"/>
</dbReference>
<dbReference type="Pfam" id="PF00004">
    <property type="entry name" value="AAA"/>
    <property type="match status" value="1"/>
</dbReference>
<dbReference type="Pfam" id="PF21960">
    <property type="entry name" value="RCF1-5-like_lid"/>
    <property type="match status" value="1"/>
</dbReference>
<dbReference type="SMART" id="SM00382">
    <property type="entry name" value="AAA"/>
    <property type="match status" value="1"/>
</dbReference>
<dbReference type="SUPFAM" id="SSF52540">
    <property type="entry name" value="P-loop containing nucleoside triphosphate hydrolases"/>
    <property type="match status" value="1"/>
</dbReference>
<proteinExistence type="evidence at protein level"/>
<keyword id="KW-0067">ATP-binding</keyword>
<keyword id="KW-0235">DNA replication</keyword>
<keyword id="KW-0547">Nucleotide-binding</keyword>
<keyword id="KW-1185">Reference proteome</keyword>
<gene>
    <name type="primary">rfcL</name>
    <name type="ordered locus">SSO0769</name>
    <name type="ORF">C40_005</name>
</gene>
<comment type="function">
    <text evidence="2 3">Part of the RFC clamp loader complex which loads the PCNA sliding clamp onto DNA. The complex possesses DNA-dependent ATPase activity.</text>
</comment>
<comment type="subunit">
    <text evidence="2 3">Heteropentamer composed of four small subunits (RfcS) and one large subunit (RfcL). Probably interacts with PCNA subunit PCNA3.</text>
</comment>
<comment type="similarity">
    <text evidence="4">Belongs to the activator 1 small subunits family. RfcL subfamily.</text>
</comment>
<evidence type="ECO:0000255" key="1"/>
<evidence type="ECO:0000269" key="2">
    <source>
    </source>
</evidence>
<evidence type="ECO:0000269" key="3">
    <source>
    </source>
</evidence>
<evidence type="ECO:0000305" key="4"/>
<accession>Q9UXF6</accession>
<feature type="chain" id="PRO_0000135966" description="Replication factor C large subunit">
    <location>
        <begin position="1"/>
        <end position="405"/>
    </location>
</feature>
<feature type="binding site" evidence="1">
    <location>
        <begin position="47"/>
        <end position="54"/>
    </location>
    <ligand>
        <name>ATP</name>
        <dbReference type="ChEBI" id="CHEBI:30616"/>
    </ligand>
</feature>
<organism>
    <name type="scientific">Saccharolobus solfataricus (strain ATCC 35092 / DSM 1617 / JCM 11322 / P2)</name>
    <name type="common">Sulfolobus solfataricus</name>
    <dbReference type="NCBI Taxonomy" id="273057"/>
    <lineage>
        <taxon>Archaea</taxon>
        <taxon>Thermoproteota</taxon>
        <taxon>Thermoprotei</taxon>
        <taxon>Sulfolobales</taxon>
        <taxon>Sulfolobaceae</taxon>
        <taxon>Saccharolobus</taxon>
    </lineage>
</organism>
<sequence>MIQWFLKYRPRSLKDVENQDDAKKQLQEWIESWLNGNSNVKAVLLHGPPGVGKTVLAEALAHDYNFELLEMNASDSRKLQDIKSIAEKAAVYGSIFGTKGKLILLDEVDGINVREDTGAIQGILELIEKTKYPIIMTANDPWNPGLRELRNKAKMIELSKLGKYPLRRILKKICQAEKIICDDEALNYIIDSSEGDARYAINILQGIGEGYGKVTLNLVESLAKRKERELDPFETLRDIFWARYAWQAKNAATSAQIDYDMLIRWISENIPIQYDNIEDIWRAFDALSRASIFLKRAKSGDWDLLSYAYDMMSSGVAFAEPEKKKPNWKPKWKKYQFPSYIQLLSKSKDIRDTRDEIIKKLAIHSSFNKALNDTYPFFLLFYKKYDKHLNLNTKEKEYLSSISKS</sequence>
<protein>
    <recommendedName>
        <fullName>Replication factor C large subunit</fullName>
        <shortName>RFC large subunit</shortName>
    </recommendedName>
    <alternativeName>
        <fullName>Clamp loader large subunit</fullName>
    </alternativeName>
    <alternativeName>
        <fullName>SsoRFC large subunit</fullName>
    </alternativeName>
</protein>
<reference key="1">
    <citation type="journal article" date="2000" name="Genome">
        <title>Gene content and organization of a 281-kbp contig from the genome of the extremely thermophilic archaeon, Sulfolobus solfataricus P2.</title>
        <authorList>
            <person name="Charlebois R.L."/>
            <person name="Singh R.K."/>
            <person name="Chan-Weiher C.C.-Y."/>
            <person name="Allard G."/>
            <person name="Chow C."/>
            <person name="Confalonieri F."/>
            <person name="Curtis B."/>
            <person name="Duguet M."/>
            <person name="Erauso G."/>
            <person name="Faguy D."/>
            <person name="Gaasterland T."/>
            <person name="Garrett R.A."/>
            <person name="Gordon P."/>
            <person name="Jeffries A.C."/>
            <person name="Kozera C."/>
            <person name="Kushwaha N."/>
            <person name="Lafleur E."/>
            <person name="Medina N."/>
            <person name="Peng X."/>
            <person name="Penny S.L."/>
            <person name="She Q."/>
            <person name="St Jean A."/>
            <person name="van der Oost J."/>
            <person name="Young F."/>
            <person name="Zivanovic Y."/>
            <person name="Doolittle W.F."/>
            <person name="Ragan M.A."/>
            <person name="Sensen C.W."/>
        </authorList>
    </citation>
    <scope>NUCLEOTIDE SEQUENCE [LARGE SCALE GENOMIC DNA]</scope>
    <source>
        <strain>ATCC 35092 / DSM 1617 / JCM 11322 / P2</strain>
    </source>
</reference>
<reference key="2">
    <citation type="journal article" date="2001" name="Proc. Natl. Acad. Sci. U.S.A.">
        <title>The complete genome of the crenarchaeon Sulfolobus solfataricus P2.</title>
        <authorList>
            <person name="She Q."/>
            <person name="Singh R.K."/>
            <person name="Confalonieri F."/>
            <person name="Zivanovic Y."/>
            <person name="Allard G."/>
            <person name="Awayez M.J."/>
            <person name="Chan-Weiher C.C.-Y."/>
            <person name="Clausen I.G."/>
            <person name="Curtis B.A."/>
            <person name="De Moors A."/>
            <person name="Erauso G."/>
            <person name="Fletcher C."/>
            <person name="Gordon P.M.K."/>
            <person name="Heikamp-de Jong I."/>
            <person name="Jeffries A.C."/>
            <person name="Kozera C.J."/>
            <person name="Medina N."/>
            <person name="Peng X."/>
            <person name="Thi-Ngoc H.P."/>
            <person name="Redder P."/>
            <person name="Schenk M.E."/>
            <person name="Theriault C."/>
            <person name="Tolstrup N."/>
            <person name="Charlebois R.L."/>
            <person name="Doolittle W.F."/>
            <person name="Duguet M."/>
            <person name="Gaasterland T."/>
            <person name="Garrett R.A."/>
            <person name="Ragan M.A."/>
            <person name="Sensen C.W."/>
            <person name="Van der Oost J."/>
        </authorList>
    </citation>
    <scope>NUCLEOTIDE SEQUENCE [LARGE SCALE GENOMIC DNA]</scope>
    <source>
        <strain>ATCC 35092 / DSM 1617 / JCM 11322 / P2</strain>
    </source>
</reference>
<reference key="3">
    <citation type="journal article" date="2000" name="J. Mol. Biol.">
        <title>Biochemical characterization of a clamp-loader complex homologous to eukaryotic replication factor C from the hyperthermophilic archaeon Sulfolobus solfataricus.</title>
        <authorList>
            <person name="Pisani F.M."/>
            <person name="De Felice M."/>
            <person name="Carpentieri F."/>
            <person name="Rossi M."/>
        </authorList>
    </citation>
    <scope>FUNCTION</scope>
    <scope>SUBUNIT</scope>
</reference>
<reference key="4">
    <citation type="journal article" date="2003" name="Mol. Cell">
        <title>A heterotrimeric PCNA in the hyperthermophilic archaeon Sulfolobus solfataricus.</title>
        <authorList>
            <person name="Dionne I."/>
            <person name="Nookala R.K."/>
            <person name="Jackson S.P."/>
            <person name="Doherty A.J."/>
            <person name="Bell S.D."/>
        </authorList>
    </citation>
    <scope>FUNCTION</scope>
    <scope>INTERACTION WITH PCNA3</scope>
    <scope>SUBUNIT</scope>
</reference>
<name>RFCL_SACS2</name>